<reference key="1">
    <citation type="journal article" date="2004" name="Nucleic Acids Res.">
        <title>Thermoadaptation trait revealed by the genome sequence of thermophilic Geobacillus kaustophilus.</title>
        <authorList>
            <person name="Takami H."/>
            <person name="Takaki Y."/>
            <person name="Chee G.-J."/>
            <person name="Nishi S."/>
            <person name="Shimamura S."/>
            <person name="Suzuki H."/>
            <person name="Matsui S."/>
            <person name="Uchiyama I."/>
        </authorList>
    </citation>
    <scope>NUCLEOTIDE SEQUENCE [LARGE SCALE GENOMIC DNA]</scope>
    <source>
        <strain>HTA426</strain>
    </source>
</reference>
<keyword id="KW-0002">3D-structure</keyword>
<keyword id="KW-0066">ATP synthesis</keyword>
<keyword id="KW-0067">ATP-binding</keyword>
<keyword id="KW-1003">Cell membrane</keyword>
<keyword id="KW-0139">CF(1)</keyword>
<keyword id="KW-0375">Hydrogen ion transport</keyword>
<keyword id="KW-0406">Ion transport</keyword>
<keyword id="KW-0472">Membrane</keyword>
<keyword id="KW-0547">Nucleotide-binding</keyword>
<keyword id="KW-1185">Reference proteome</keyword>
<keyword id="KW-1278">Translocase</keyword>
<keyword id="KW-0813">Transport</keyword>
<name>ATPB_GEOKA</name>
<feature type="chain" id="PRO_0000254267" description="ATP synthase subunit beta">
    <location>
        <begin position="1"/>
        <end position="473"/>
    </location>
</feature>
<feature type="binding site" evidence="1">
    <location>
        <begin position="158"/>
        <end position="165"/>
    </location>
    <ligand>
        <name>ATP</name>
        <dbReference type="ChEBI" id="CHEBI:30616"/>
    </ligand>
</feature>
<comment type="function">
    <text evidence="1">Produces ATP from ADP in the presence of a proton gradient across the membrane. The catalytic sites are hosted primarily by the beta subunits.</text>
</comment>
<comment type="catalytic activity">
    <reaction evidence="1">
        <text>ATP + H2O + 4 H(+)(in) = ADP + phosphate + 5 H(+)(out)</text>
        <dbReference type="Rhea" id="RHEA:57720"/>
        <dbReference type="ChEBI" id="CHEBI:15377"/>
        <dbReference type="ChEBI" id="CHEBI:15378"/>
        <dbReference type="ChEBI" id="CHEBI:30616"/>
        <dbReference type="ChEBI" id="CHEBI:43474"/>
        <dbReference type="ChEBI" id="CHEBI:456216"/>
        <dbReference type="EC" id="7.1.2.2"/>
    </reaction>
</comment>
<comment type="subunit">
    <text evidence="1">F-type ATPases have 2 components, CF(1) - the catalytic core - and CF(0) - the membrane proton channel. CF(1) has five subunits: alpha(3), beta(3), gamma(1), delta(1), epsilon(1). CF(0) has three main subunits: a(1), b(2) and c(9-12). The alpha and beta chains form an alternating ring which encloses part of the gamma chain. CF(1) is attached to CF(0) by a central stalk formed by the gamma and epsilon chains, while a peripheral stalk is formed by the delta and b chains.</text>
</comment>
<comment type="subcellular location">
    <subcellularLocation>
        <location evidence="1">Cell membrane</location>
        <topology evidence="1">Peripheral membrane protein</topology>
    </subcellularLocation>
</comment>
<comment type="similarity">
    <text evidence="1">Belongs to the ATPase alpha/beta chains family.</text>
</comment>
<evidence type="ECO:0000255" key="1">
    <source>
        <dbReference type="HAMAP-Rule" id="MF_01347"/>
    </source>
</evidence>
<dbReference type="EC" id="7.1.2.2" evidence="1"/>
<dbReference type="EMBL" id="BA000043">
    <property type="protein sequence ID" value="BAD77643.1"/>
    <property type="molecule type" value="Genomic_DNA"/>
</dbReference>
<dbReference type="RefSeq" id="WP_011232825.1">
    <property type="nucleotide sequence ID" value="NC_006510.1"/>
</dbReference>
<dbReference type="PDB" id="4XD7">
    <property type="method" value="X-ray"/>
    <property type="resolution" value="3.90 A"/>
    <property type="chains" value="D/E/F=2-473"/>
</dbReference>
<dbReference type="PDBsum" id="4XD7"/>
<dbReference type="BMRB" id="Q5KUJ3"/>
<dbReference type="SMR" id="Q5KUJ3"/>
<dbReference type="STRING" id="235909.GK3358"/>
<dbReference type="GeneID" id="32065242"/>
<dbReference type="KEGG" id="gka:GK3358"/>
<dbReference type="eggNOG" id="COG0055">
    <property type="taxonomic scope" value="Bacteria"/>
</dbReference>
<dbReference type="HOGENOM" id="CLU_022398_0_2_9"/>
<dbReference type="Proteomes" id="UP000001172">
    <property type="component" value="Chromosome"/>
</dbReference>
<dbReference type="GO" id="GO:0005886">
    <property type="term" value="C:plasma membrane"/>
    <property type="evidence" value="ECO:0007669"/>
    <property type="project" value="UniProtKB-SubCell"/>
</dbReference>
<dbReference type="GO" id="GO:0045259">
    <property type="term" value="C:proton-transporting ATP synthase complex"/>
    <property type="evidence" value="ECO:0007669"/>
    <property type="project" value="UniProtKB-KW"/>
</dbReference>
<dbReference type="GO" id="GO:0005524">
    <property type="term" value="F:ATP binding"/>
    <property type="evidence" value="ECO:0007669"/>
    <property type="project" value="UniProtKB-UniRule"/>
</dbReference>
<dbReference type="GO" id="GO:0016887">
    <property type="term" value="F:ATP hydrolysis activity"/>
    <property type="evidence" value="ECO:0007669"/>
    <property type="project" value="InterPro"/>
</dbReference>
<dbReference type="GO" id="GO:0046933">
    <property type="term" value="F:proton-transporting ATP synthase activity, rotational mechanism"/>
    <property type="evidence" value="ECO:0007669"/>
    <property type="project" value="UniProtKB-UniRule"/>
</dbReference>
<dbReference type="CDD" id="cd18110">
    <property type="entry name" value="ATP-synt_F1_beta_C"/>
    <property type="match status" value="1"/>
</dbReference>
<dbReference type="CDD" id="cd18115">
    <property type="entry name" value="ATP-synt_F1_beta_N"/>
    <property type="match status" value="1"/>
</dbReference>
<dbReference type="CDD" id="cd01133">
    <property type="entry name" value="F1-ATPase_beta_CD"/>
    <property type="match status" value="1"/>
</dbReference>
<dbReference type="FunFam" id="1.10.1140.10:FF:000001">
    <property type="entry name" value="ATP synthase subunit beta"/>
    <property type="match status" value="1"/>
</dbReference>
<dbReference type="FunFam" id="2.40.10.170:FF:000005">
    <property type="entry name" value="ATP synthase subunit beta"/>
    <property type="match status" value="1"/>
</dbReference>
<dbReference type="FunFam" id="3.40.50.300:FF:000004">
    <property type="entry name" value="ATP synthase subunit beta"/>
    <property type="match status" value="1"/>
</dbReference>
<dbReference type="Gene3D" id="2.40.10.170">
    <property type="match status" value="1"/>
</dbReference>
<dbReference type="Gene3D" id="1.10.1140.10">
    <property type="entry name" value="Bovine Mitochondrial F1-atpase, Atp Synthase Beta Chain, Chain D, domain 3"/>
    <property type="match status" value="1"/>
</dbReference>
<dbReference type="Gene3D" id="3.40.50.300">
    <property type="entry name" value="P-loop containing nucleotide triphosphate hydrolases"/>
    <property type="match status" value="1"/>
</dbReference>
<dbReference type="HAMAP" id="MF_01347">
    <property type="entry name" value="ATP_synth_beta_bact"/>
    <property type="match status" value="1"/>
</dbReference>
<dbReference type="InterPro" id="IPR003593">
    <property type="entry name" value="AAA+_ATPase"/>
</dbReference>
<dbReference type="InterPro" id="IPR055190">
    <property type="entry name" value="ATP-synt_VA_C"/>
</dbReference>
<dbReference type="InterPro" id="IPR005722">
    <property type="entry name" value="ATP_synth_F1_bsu"/>
</dbReference>
<dbReference type="InterPro" id="IPR020003">
    <property type="entry name" value="ATPase_a/bsu_AS"/>
</dbReference>
<dbReference type="InterPro" id="IPR050053">
    <property type="entry name" value="ATPase_alpha/beta_chains"/>
</dbReference>
<dbReference type="InterPro" id="IPR004100">
    <property type="entry name" value="ATPase_F1/V1/A1_a/bsu_N"/>
</dbReference>
<dbReference type="InterPro" id="IPR036121">
    <property type="entry name" value="ATPase_F1/V1/A1_a/bsu_N_sf"/>
</dbReference>
<dbReference type="InterPro" id="IPR000194">
    <property type="entry name" value="ATPase_F1/V1/A1_a/bsu_nucl-bd"/>
</dbReference>
<dbReference type="InterPro" id="IPR024034">
    <property type="entry name" value="ATPase_F1/V1_b/a_C"/>
</dbReference>
<dbReference type="InterPro" id="IPR027417">
    <property type="entry name" value="P-loop_NTPase"/>
</dbReference>
<dbReference type="NCBIfam" id="TIGR01039">
    <property type="entry name" value="atpD"/>
    <property type="match status" value="1"/>
</dbReference>
<dbReference type="PANTHER" id="PTHR15184">
    <property type="entry name" value="ATP SYNTHASE"/>
    <property type="match status" value="1"/>
</dbReference>
<dbReference type="PANTHER" id="PTHR15184:SF71">
    <property type="entry name" value="ATP SYNTHASE SUBUNIT BETA, MITOCHONDRIAL"/>
    <property type="match status" value="1"/>
</dbReference>
<dbReference type="Pfam" id="PF00006">
    <property type="entry name" value="ATP-synt_ab"/>
    <property type="match status" value="1"/>
</dbReference>
<dbReference type="Pfam" id="PF02874">
    <property type="entry name" value="ATP-synt_ab_N"/>
    <property type="match status" value="1"/>
</dbReference>
<dbReference type="Pfam" id="PF22919">
    <property type="entry name" value="ATP-synt_VA_C"/>
    <property type="match status" value="1"/>
</dbReference>
<dbReference type="SMART" id="SM00382">
    <property type="entry name" value="AAA"/>
    <property type="match status" value="1"/>
</dbReference>
<dbReference type="SUPFAM" id="SSF47917">
    <property type="entry name" value="C-terminal domain of alpha and beta subunits of F1 ATP synthase"/>
    <property type="match status" value="1"/>
</dbReference>
<dbReference type="SUPFAM" id="SSF50615">
    <property type="entry name" value="N-terminal domain of alpha and beta subunits of F1 ATP synthase"/>
    <property type="match status" value="1"/>
</dbReference>
<dbReference type="SUPFAM" id="SSF52540">
    <property type="entry name" value="P-loop containing nucleoside triphosphate hydrolases"/>
    <property type="match status" value="1"/>
</dbReference>
<dbReference type="PROSITE" id="PS00152">
    <property type="entry name" value="ATPASE_ALPHA_BETA"/>
    <property type="match status" value="1"/>
</dbReference>
<accession>Q5KUJ3</accession>
<protein>
    <recommendedName>
        <fullName evidence="1">ATP synthase subunit beta</fullName>
        <ecNumber evidence="1">7.1.2.2</ecNumber>
    </recommendedName>
    <alternativeName>
        <fullName evidence="1">ATP synthase F1 sector subunit beta</fullName>
    </alternativeName>
    <alternativeName>
        <fullName evidence="1">F-ATPase subunit beta</fullName>
    </alternativeName>
</protein>
<gene>
    <name evidence="1" type="primary">atpD</name>
    <name type="ordered locus">GK3358</name>
</gene>
<organism>
    <name type="scientific">Geobacillus kaustophilus (strain HTA426)</name>
    <dbReference type="NCBI Taxonomy" id="235909"/>
    <lineage>
        <taxon>Bacteria</taxon>
        <taxon>Bacillati</taxon>
        <taxon>Bacillota</taxon>
        <taxon>Bacilli</taxon>
        <taxon>Bacillales</taxon>
        <taxon>Anoxybacillaceae</taxon>
        <taxon>Geobacillus</taxon>
        <taxon>Geobacillus thermoleovorans group</taxon>
    </lineage>
</organism>
<proteinExistence type="evidence at protein level"/>
<sequence length="473" mass="51853">MTRGRVIQVMGPVVDVKFENGHLPAIYNALKIQHKARNENEVDIDLTLEVALHLGDDTVRTIAMASTDGLIRGMEVIDTGAPISVPVGEVTLGRVFNVLGEPIDLEGDIPADARRDPIHRPAPKFEELATEVEILETGIKVVDLLAPYIKGGKIGLFGGAGVGKTVLIQELIHNIAQEHGGISVFAGVGERTREGNDLYHEMKDSGVISKTAMVFGQMNEPPGARMRVALTGLTMAEYFRDEQGQDVLLFIDNIFRFTQAGSEVSALLGRMPSAVGYQPTLATEMGQLQERITSTAKGSITSIQAIYVPADDYTDPAPATTFSHLDATTNLERKLAEMGIYPAVDPLASTSRALAPEIVGEEHYQVARKVQQTLQRYKELQDIIAILGMDELSDEDKLVVHRARRIQFFLSQNFHVAEQFTGQPGSYVPVKETVRGFKEILEGKYDHLPEDAFRLVGRIEEVVEKAKAMGVEV</sequence>